<reference key="1">
    <citation type="journal article" date="2002" name="Mol. Microbiol.">
        <title>Genome sequence of Streptococcus agalactiae, a pathogen causing invasive neonatal disease.</title>
        <authorList>
            <person name="Glaser P."/>
            <person name="Rusniok C."/>
            <person name="Buchrieser C."/>
            <person name="Chevalier F."/>
            <person name="Frangeul L."/>
            <person name="Msadek T."/>
            <person name="Zouine M."/>
            <person name="Couve E."/>
            <person name="Lalioui L."/>
            <person name="Poyart C."/>
            <person name="Trieu-Cuot P."/>
            <person name="Kunst F."/>
        </authorList>
    </citation>
    <scope>NUCLEOTIDE SEQUENCE [LARGE SCALE GENOMIC DNA]</scope>
    <source>
        <strain>NEM316</strain>
    </source>
</reference>
<proteinExistence type="inferred from homology"/>
<comment type="similarity">
    <text evidence="1">Belongs to the UPF0246 family.</text>
</comment>
<organism>
    <name type="scientific">Streptococcus agalactiae serotype III (strain NEM316)</name>
    <dbReference type="NCBI Taxonomy" id="211110"/>
    <lineage>
        <taxon>Bacteria</taxon>
        <taxon>Bacillati</taxon>
        <taxon>Bacillota</taxon>
        <taxon>Bacilli</taxon>
        <taxon>Lactobacillales</taxon>
        <taxon>Streptococcaceae</taxon>
        <taxon>Streptococcus</taxon>
    </lineage>
</organism>
<name>Y2036_STRA3</name>
<accession>Q8E2T1</accession>
<protein>
    <recommendedName>
        <fullName evidence="1">UPF0246 protein gbs2036</fullName>
    </recommendedName>
</protein>
<feature type="chain" id="PRO_0000204005" description="UPF0246 protein gbs2036">
    <location>
        <begin position="1"/>
        <end position="243"/>
    </location>
</feature>
<evidence type="ECO:0000255" key="1">
    <source>
        <dbReference type="HAMAP-Rule" id="MF_00652"/>
    </source>
</evidence>
<dbReference type="EMBL" id="AL766856">
    <property type="protein sequence ID" value="CAD47695.1"/>
    <property type="molecule type" value="Genomic_DNA"/>
</dbReference>
<dbReference type="SMR" id="Q8E2T1"/>
<dbReference type="KEGG" id="san:gbs2036"/>
<dbReference type="eggNOG" id="COG3022">
    <property type="taxonomic scope" value="Bacteria"/>
</dbReference>
<dbReference type="HOGENOM" id="CLU_061989_2_1_9"/>
<dbReference type="Proteomes" id="UP000000823">
    <property type="component" value="Chromosome"/>
</dbReference>
<dbReference type="GO" id="GO:0005829">
    <property type="term" value="C:cytosol"/>
    <property type="evidence" value="ECO:0007669"/>
    <property type="project" value="TreeGrafter"/>
</dbReference>
<dbReference type="GO" id="GO:0033194">
    <property type="term" value="P:response to hydroperoxide"/>
    <property type="evidence" value="ECO:0007669"/>
    <property type="project" value="TreeGrafter"/>
</dbReference>
<dbReference type="HAMAP" id="MF_00652">
    <property type="entry name" value="UPF0246"/>
    <property type="match status" value="1"/>
</dbReference>
<dbReference type="InterPro" id="IPR005583">
    <property type="entry name" value="YaaA"/>
</dbReference>
<dbReference type="NCBIfam" id="NF002543">
    <property type="entry name" value="PRK02101.1-4"/>
    <property type="match status" value="1"/>
</dbReference>
<dbReference type="PANTHER" id="PTHR30283:SF4">
    <property type="entry name" value="PEROXIDE STRESS RESISTANCE PROTEIN YAAA"/>
    <property type="match status" value="1"/>
</dbReference>
<dbReference type="PANTHER" id="PTHR30283">
    <property type="entry name" value="PEROXIDE STRESS RESPONSE PROTEIN YAAA"/>
    <property type="match status" value="1"/>
</dbReference>
<dbReference type="Pfam" id="PF03883">
    <property type="entry name" value="H2O2_YaaD"/>
    <property type="match status" value="1"/>
</dbReference>
<sequence>MIKILIPTAKEMKVCQNIARPKLSAQTKIIIDYFSTLTVSDLEDIYRINTSAARCEAQRWQDFKSKQLTLNPAIKLFNGLMYRNIKRHNLSTSEAQFMENSVFITSALYGIIPAMTLISPHRLDFNTKIKINNNSLKVFWRENYDTFMQSDDIMVSLLSNEFETVFSPKERQKLIHLNFIEDRDGQLKTHSTISKKARGKCLTAMMENNCQTLEHLKQLRFDGFCYDNELSDSKQLTFVKKQT</sequence>
<gene>
    <name type="ordered locus">gbs2036</name>
</gene>